<accession>O42706</accession>
<accession>Q9P4W8</accession>
<keyword id="KW-0002">3D-structure</keyword>
<keyword id="KW-0963">Cytoplasm</keyword>
<keyword id="KW-1185">Reference proteome</keyword>
<keyword id="KW-0687">Ribonucleoprotein</keyword>
<keyword id="KW-0689">Ribosomal protein</keyword>
<dbReference type="EMBL" id="CU329670">
    <property type="protein sequence ID" value="CAB93015.1"/>
    <property type="molecule type" value="Genomic_DNA"/>
</dbReference>
<dbReference type="EMBL" id="AB010901">
    <property type="protein sequence ID" value="BAA24802.1"/>
    <property type="molecule type" value="mRNA"/>
</dbReference>
<dbReference type="PIR" id="T43320">
    <property type="entry name" value="T43320"/>
</dbReference>
<dbReference type="RefSeq" id="NP_594175.1">
    <property type="nucleotide sequence ID" value="NM_001019600.2"/>
</dbReference>
<dbReference type="PDB" id="9AXT">
    <property type="method" value="EM"/>
    <property type="resolution" value="2.40 A"/>
    <property type="chains" value="Bf=1-160"/>
</dbReference>
<dbReference type="PDB" id="9AXU">
    <property type="method" value="EM"/>
    <property type="resolution" value="1.94 A"/>
    <property type="chains" value="f=1-160"/>
</dbReference>
<dbReference type="PDB" id="9AXV">
    <property type="method" value="EM"/>
    <property type="resolution" value="2.40 A"/>
    <property type="chains" value="Bf=1-160"/>
</dbReference>
<dbReference type="PDBsum" id="9AXT"/>
<dbReference type="PDBsum" id="9AXU"/>
<dbReference type="PDBsum" id="9AXV"/>
<dbReference type="EMDB" id="EMD-43972"/>
<dbReference type="EMDB" id="EMD-43973"/>
<dbReference type="EMDB" id="EMD-43976"/>
<dbReference type="SMR" id="O42706"/>
<dbReference type="BioGRID" id="279760">
    <property type="interactions" value="64"/>
</dbReference>
<dbReference type="FunCoup" id="O42706">
    <property type="interactions" value="525"/>
</dbReference>
<dbReference type="STRING" id="284812.O42706"/>
<dbReference type="iPTMnet" id="O42706"/>
<dbReference type="PaxDb" id="4896-SPAC959.08.1"/>
<dbReference type="EnsemblFungi" id="SPAC959.08.1">
    <property type="protein sequence ID" value="SPAC959.08.1:pep"/>
    <property type="gene ID" value="SPAC959.08"/>
</dbReference>
<dbReference type="GeneID" id="2543337"/>
<dbReference type="KEGG" id="spo:2543337"/>
<dbReference type="PomBase" id="SPAC959.08">
    <property type="gene designation" value="rpl2102"/>
</dbReference>
<dbReference type="VEuPathDB" id="FungiDB:SPAC959.08"/>
<dbReference type="eggNOG" id="KOG1732">
    <property type="taxonomic scope" value="Eukaryota"/>
</dbReference>
<dbReference type="HOGENOM" id="CLU_103610_0_1_1"/>
<dbReference type="InParanoid" id="O42706"/>
<dbReference type="OMA" id="HVQASRC"/>
<dbReference type="PhylomeDB" id="O42706"/>
<dbReference type="Reactome" id="R-SPO-156827">
    <property type="pathway name" value="L13a-mediated translational silencing of Ceruloplasmin expression"/>
</dbReference>
<dbReference type="Reactome" id="R-SPO-1799339">
    <property type="pathway name" value="SRP-dependent cotranslational protein targeting to membrane"/>
</dbReference>
<dbReference type="Reactome" id="R-SPO-72689">
    <property type="pathway name" value="Formation of a pool of free 40S subunits"/>
</dbReference>
<dbReference type="Reactome" id="R-SPO-72706">
    <property type="pathway name" value="GTP hydrolysis and joining of the 60S ribosomal subunit"/>
</dbReference>
<dbReference type="Reactome" id="R-SPO-975956">
    <property type="pathway name" value="Nonsense Mediated Decay (NMD) independent of the Exon Junction Complex (EJC)"/>
</dbReference>
<dbReference type="Reactome" id="R-SPO-975957">
    <property type="pathway name" value="Nonsense Mediated Decay (NMD) enhanced by the Exon Junction Complex (EJC)"/>
</dbReference>
<dbReference type="PRO" id="PR:O42706"/>
<dbReference type="Proteomes" id="UP000002485">
    <property type="component" value="Chromosome I"/>
</dbReference>
<dbReference type="GO" id="GO:0005829">
    <property type="term" value="C:cytosol"/>
    <property type="evidence" value="ECO:0007005"/>
    <property type="project" value="PomBase"/>
</dbReference>
<dbReference type="GO" id="GO:0022625">
    <property type="term" value="C:cytosolic large ribosomal subunit"/>
    <property type="evidence" value="ECO:0000269"/>
    <property type="project" value="PomBase"/>
</dbReference>
<dbReference type="GO" id="GO:0030684">
    <property type="term" value="C:preribosome"/>
    <property type="evidence" value="ECO:0000314"/>
    <property type="project" value="PomBase"/>
</dbReference>
<dbReference type="GO" id="GO:0003735">
    <property type="term" value="F:structural constituent of ribosome"/>
    <property type="evidence" value="ECO:0000318"/>
    <property type="project" value="GO_Central"/>
</dbReference>
<dbReference type="GO" id="GO:0002181">
    <property type="term" value="P:cytoplasmic translation"/>
    <property type="evidence" value="ECO:0000266"/>
    <property type="project" value="PomBase"/>
</dbReference>
<dbReference type="FunFam" id="2.30.30.70:FF:000001">
    <property type="entry name" value="60S ribosomal protein L21"/>
    <property type="match status" value="1"/>
</dbReference>
<dbReference type="FunFam" id="6.10.250.3260:FF:000001">
    <property type="entry name" value="60S ribosomal protein L21"/>
    <property type="match status" value="1"/>
</dbReference>
<dbReference type="Gene3D" id="6.10.250.3260">
    <property type="match status" value="1"/>
</dbReference>
<dbReference type="Gene3D" id="2.30.30.70">
    <property type="entry name" value="Ribosomal protein L21"/>
    <property type="match status" value="1"/>
</dbReference>
<dbReference type="InterPro" id="IPR001147">
    <property type="entry name" value="Ribosomal_eL21"/>
</dbReference>
<dbReference type="InterPro" id="IPR018259">
    <property type="entry name" value="Ribosomal_eL21_CS"/>
</dbReference>
<dbReference type="InterPro" id="IPR036948">
    <property type="entry name" value="Ribosomal_eL21_sf"/>
</dbReference>
<dbReference type="InterPro" id="IPR008991">
    <property type="entry name" value="Translation_prot_SH3-like_sf"/>
</dbReference>
<dbReference type="PANTHER" id="PTHR20981">
    <property type="entry name" value="60S RIBOSOMAL PROTEIN L21"/>
    <property type="match status" value="1"/>
</dbReference>
<dbReference type="Pfam" id="PF01157">
    <property type="entry name" value="Ribosomal_L21e"/>
    <property type="match status" value="1"/>
</dbReference>
<dbReference type="SUPFAM" id="SSF50104">
    <property type="entry name" value="Translation proteins SH3-like domain"/>
    <property type="match status" value="1"/>
</dbReference>
<dbReference type="PROSITE" id="PS01171">
    <property type="entry name" value="RIBOSOMAL_L21E"/>
    <property type="match status" value="1"/>
</dbReference>
<gene>
    <name type="primary">rpl2102</name>
    <name type="synonym">rpl21b</name>
    <name type="ORF">SPAC959.08</name>
</gene>
<sequence>MPHSYGIRARTRYTFQRGFREHGQIRLSTYLKTYKVGDIVDIKVNGAVQKGMPHKYYHGKTGVVYNVTQSSVGVLIYKVVGNRYMEKRVNVRIEHVKHSKCRQDFLDRVKANEAKRKEAKAQGKTVQLRRQPAPPATAHFVSTENNEPVTLHPVAYDTTI</sequence>
<proteinExistence type="evidence at protein level"/>
<reference key="1">
    <citation type="journal article" date="2002" name="Nature">
        <title>The genome sequence of Schizosaccharomyces pombe.</title>
        <authorList>
            <person name="Wood V."/>
            <person name="Gwilliam R."/>
            <person name="Rajandream M.A."/>
            <person name="Lyne M.H."/>
            <person name="Lyne R."/>
            <person name="Stewart A."/>
            <person name="Sgouros J.G."/>
            <person name="Peat N."/>
            <person name="Hayles J."/>
            <person name="Baker S.G."/>
            <person name="Basham D."/>
            <person name="Bowman S."/>
            <person name="Brooks K."/>
            <person name="Brown D."/>
            <person name="Brown S."/>
            <person name="Chillingworth T."/>
            <person name="Churcher C.M."/>
            <person name="Collins M."/>
            <person name="Connor R."/>
            <person name="Cronin A."/>
            <person name="Davis P."/>
            <person name="Feltwell T."/>
            <person name="Fraser A."/>
            <person name="Gentles S."/>
            <person name="Goble A."/>
            <person name="Hamlin N."/>
            <person name="Harris D.E."/>
            <person name="Hidalgo J."/>
            <person name="Hodgson G."/>
            <person name="Holroyd S."/>
            <person name="Hornsby T."/>
            <person name="Howarth S."/>
            <person name="Huckle E.J."/>
            <person name="Hunt S."/>
            <person name="Jagels K."/>
            <person name="James K.D."/>
            <person name="Jones L."/>
            <person name="Jones M."/>
            <person name="Leather S."/>
            <person name="McDonald S."/>
            <person name="McLean J."/>
            <person name="Mooney P."/>
            <person name="Moule S."/>
            <person name="Mungall K.L."/>
            <person name="Murphy L.D."/>
            <person name="Niblett D."/>
            <person name="Odell C."/>
            <person name="Oliver K."/>
            <person name="O'Neil S."/>
            <person name="Pearson D."/>
            <person name="Quail M.A."/>
            <person name="Rabbinowitsch E."/>
            <person name="Rutherford K.M."/>
            <person name="Rutter S."/>
            <person name="Saunders D."/>
            <person name="Seeger K."/>
            <person name="Sharp S."/>
            <person name="Skelton J."/>
            <person name="Simmonds M.N."/>
            <person name="Squares R."/>
            <person name="Squares S."/>
            <person name="Stevens K."/>
            <person name="Taylor K."/>
            <person name="Taylor R.G."/>
            <person name="Tivey A."/>
            <person name="Walsh S.V."/>
            <person name="Warren T."/>
            <person name="Whitehead S."/>
            <person name="Woodward J.R."/>
            <person name="Volckaert G."/>
            <person name="Aert R."/>
            <person name="Robben J."/>
            <person name="Grymonprez B."/>
            <person name="Weltjens I."/>
            <person name="Vanstreels E."/>
            <person name="Rieger M."/>
            <person name="Schaefer M."/>
            <person name="Mueller-Auer S."/>
            <person name="Gabel C."/>
            <person name="Fuchs M."/>
            <person name="Duesterhoeft A."/>
            <person name="Fritzc C."/>
            <person name="Holzer E."/>
            <person name="Moestl D."/>
            <person name="Hilbert H."/>
            <person name="Borzym K."/>
            <person name="Langer I."/>
            <person name="Beck A."/>
            <person name="Lehrach H."/>
            <person name="Reinhardt R."/>
            <person name="Pohl T.M."/>
            <person name="Eger P."/>
            <person name="Zimmermann W."/>
            <person name="Wedler H."/>
            <person name="Wambutt R."/>
            <person name="Purnelle B."/>
            <person name="Goffeau A."/>
            <person name="Cadieu E."/>
            <person name="Dreano S."/>
            <person name="Gloux S."/>
            <person name="Lelaure V."/>
            <person name="Mottier S."/>
            <person name="Galibert F."/>
            <person name="Aves S.J."/>
            <person name="Xiang Z."/>
            <person name="Hunt C."/>
            <person name="Moore K."/>
            <person name="Hurst S.M."/>
            <person name="Lucas M."/>
            <person name="Rochet M."/>
            <person name="Gaillardin C."/>
            <person name="Tallada V.A."/>
            <person name="Garzon A."/>
            <person name="Thode G."/>
            <person name="Daga R.R."/>
            <person name="Cruzado L."/>
            <person name="Jimenez J."/>
            <person name="Sanchez M."/>
            <person name="del Rey F."/>
            <person name="Benito J."/>
            <person name="Dominguez A."/>
            <person name="Revuelta J.L."/>
            <person name="Moreno S."/>
            <person name="Armstrong J."/>
            <person name="Forsburg S.L."/>
            <person name="Cerutti L."/>
            <person name="Lowe T."/>
            <person name="McCombie W.R."/>
            <person name="Paulsen I."/>
            <person name="Potashkin J."/>
            <person name="Shpakovski G.V."/>
            <person name="Ussery D."/>
            <person name="Barrell B.G."/>
            <person name="Nurse P."/>
        </authorList>
    </citation>
    <scope>NUCLEOTIDE SEQUENCE [LARGE SCALE GENOMIC DNA]</scope>
    <source>
        <strain>972 / ATCC 24843</strain>
    </source>
</reference>
<reference key="2">
    <citation type="submission" date="1998-02" db="EMBL/GenBank/DDBJ databases">
        <title>S.pombe ribosomal protein L21 homolog.</title>
        <authorList>
            <person name="Kawamukai M."/>
        </authorList>
    </citation>
    <scope>NUCLEOTIDE SEQUENCE [MRNA] OF 3-160</scope>
</reference>
<reference key="3">
    <citation type="journal article" date="2006" name="Nat. Biotechnol.">
        <title>ORFeome cloning and global analysis of protein localization in the fission yeast Schizosaccharomyces pombe.</title>
        <authorList>
            <person name="Matsuyama A."/>
            <person name="Arai R."/>
            <person name="Yashiroda Y."/>
            <person name="Shirai A."/>
            <person name="Kamata A."/>
            <person name="Sekido S."/>
            <person name="Kobayashi Y."/>
            <person name="Hashimoto A."/>
            <person name="Hamamoto M."/>
            <person name="Hiraoka Y."/>
            <person name="Horinouchi S."/>
            <person name="Yoshida M."/>
        </authorList>
    </citation>
    <scope>SUBCELLULAR LOCATION [LARGE SCALE ANALYSIS]</scope>
</reference>
<protein>
    <recommendedName>
        <fullName evidence="4">Large ribosomal subunit protein eL21B</fullName>
    </recommendedName>
    <alternativeName>
        <fullName>60S ribosomal protein L21-B</fullName>
    </alternativeName>
</protein>
<name>RL21B_SCHPO</name>
<evidence type="ECO:0000250" key="1">
    <source>
        <dbReference type="UniProtKB" id="Q12672"/>
    </source>
</evidence>
<evidence type="ECO:0000256" key="2">
    <source>
        <dbReference type="SAM" id="MobiDB-lite"/>
    </source>
</evidence>
<evidence type="ECO:0000269" key="3">
    <source>
    </source>
</evidence>
<evidence type="ECO:0000305" key="4"/>
<feature type="chain" id="PRO_0000149681" description="Large ribosomal subunit protein eL21B">
    <location>
        <begin position="1"/>
        <end position="160"/>
    </location>
</feature>
<feature type="region of interest" description="Disordered" evidence="2">
    <location>
        <begin position="114"/>
        <end position="140"/>
    </location>
</feature>
<organism>
    <name type="scientific">Schizosaccharomyces pombe (strain 972 / ATCC 24843)</name>
    <name type="common">Fission yeast</name>
    <dbReference type="NCBI Taxonomy" id="284812"/>
    <lineage>
        <taxon>Eukaryota</taxon>
        <taxon>Fungi</taxon>
        <taxon>Dikarya</taxon>
        <taxon>Ascomycota</taxon>
        <taxon>Taphrinomycotina</taxon>
        <taxon>Schizosaccharomycetes</taxon>
        <taxon>Schizosaccharomycetales</taxon>
        <taxon>Schizosaccharomycetaceae</taxon>
        <taxon>Schizosaccharomyces</taxon>
    </lineage>
</organism>
<comment type="function">
    <text evidence="1">Component of the ribosome, a large ribonucleoprotein complex responsible for the synthesis of proteins in the cell. The small ribosomal subunit (SSU) binds messenger RNAs (mRNAs) and translates the encoded message by selecting cognate aminoacyl-transfer RNA (tRNA) molecules. The large subunit (LSU) contains the ribosomal catalytic site termed the peptidyl transferase center (PTC), which catalyzes the formation of peptide bonds, thereby polymerizing the amino acids delivered by tRNAs into a polypeptide chain. The nascent polypeptides leave the ribosome through a tunnel in the LSU and interact with protein factors that function in enzymatic processing, targeting, and the membrane insertion of nascent chains at the exit of the ribosomal tunnel.</text>
</comment>
<comment type="subunit">
    <text evidence="1">Component of the large ribosomal subunit (LSU). Mature yeast ribosomes consist of a small (40S) and a large (60S) subunit. The 40S small subunit contains 1 molecule of ribosomal RNA (18S rRNA) and at least 33 different proteins. The large 60S subunit contains 3 rRNA molecules (25S, 5.8S and 5S rRNA) and at least 46 different proteins.</text>
</comment>
<comment type="subcellular location">
    <subcellularLocation>
        <location evidence="3">Cytoplasm</location>
    </subcellularLocation>
</comment>
<comment type="miscellaneous">
    <text>There are 2 genes for eL21 in S.pombe.</text>
</comment>
<comment type="similarity">
    <text evidence="4">Belongs to the eukaryotic ribosomal protein eL21 family.</text>
</comment>